<keyword id="KW-0067">ATP-binding</keyword>
<keyword id="KW-0418">Kinase</keyword>
<keyword id="KW-0547">Nucleotide-binding</keyword>
<keyword id="KW-0597">Phosphoprotein</keyword>
<keyword id="KW-1185">Reference proteome</keyword>
<keyword id="KW-0723">Serine/threonine-protein kinase</keyword>
<keyword id="KW-0346">Stress response</keyword>
<keyword id="KW-0808">Transferase</keyword>
<proteinExistence type="evidence at protein level"/>
<sequence length="668" mass="71126">MPLTPGTLLAGRYELLALLGEGGSAQVYRAQDGLLGREVALKVMHDYLPESDRSRFLREVRTLARLTHPGVVPVLDLGQEPEAGRPFFTMPLLTGGPITRLGPLEDAPGPLARFLTAAAFASRALHHVHSHGIVHRDLTPGNVLLDDTGLPRIMDFGLVALSEQTRHLTRSGVTLGTPAYMAPEQAKGGGVDARSDLYALGAVLYRVACGSPPFVGDSDQSVLYQHVYEPVPDPRDLNPAVPDAVARVLLWLLAKRADRRPQSGAALAHLWALARRDLWTTHARGQYRGGRARTGEHPDGPARVSDMQELWSVALPGEVTWPAAVVGEGDLVAVGTRGGQLVLTHTSGRPFATYAARDEVTAPATLIGGHVLYGAWDGTLRRVELQSGSEVWRHQARAEFTGAPTVWGGRLLAPSRDGHLHALSLRTGELAWAYRAGGSLAASPLVWAGAALQCDETGWLHALDARSGTPLWKVEVGTVHATPALLPGPPGTATLVIATWEGEVHAIGLEVQNGRAALAGEDAIRWTYDVEDEVWASPALTALDLPPDSGAAPDASAAPGGVVVVAGWGGKVRGLRLADGEDLWERTLDGRVTASPVISAGLVFLATEGGELLALDVRNGEVRWTCRERSGVQATPLAASGTLYVAFMDGTLRAYRNAHPEWRSEQEG</sequence>
<accession>Q9RRH3</accession>
<feature type="chain" id="PRO_0000429795" description="DNA damage-responsive serine/threonine-protein kinase RqkA">
    <location>
        <begin position="1"/>
        <end position="668"/>
    </location>
</feature>
<feature type="domain" description="Protein kinase" evidence="1">
    <location>
        <begin position="13"/>
        <end position="272"/>
    </location>
</feature>
<feature type="active site" description="Proton acceptor" evidence="1">
    <location>
        <position position="137"/>
    </location>
</feature>
<feature type="binding site" evidence="1">
    <location>
        <begin position="19"/>
        <end position="27"/>
    </location>
    <ligand>
        <name>ATP</name>
        <dbReference type="ChEBI" id="CHEBI:30616"/>
    </ligand>
</feature>
<feature type="binding site" evidence="5">
    <location>
        <position position="42"/>
    </location>
    <ligand>
        <name>ATP</name>
        <dbReference type="ChEBI" id="CHEBI:30616"/>
    </ligand>
</feature>
<feature type="mutagenesis site" description="Lack of activity." evidence="4">
    <original>K</original>
    <variation>A</variation>
    <location>
        <position position="42"/>
    </location>
</feature>
<feature type="mutagenesis site" description="Almost no change in activity." evidence="4">
    <original>S</original>
    <variation>A</variation>
    <location>
        <position position="162"/>
    </location>
</feature>
<feature type="mutagenesis site" description="Strong decrease in activity." evidence="4">
    <original>T</original>
    <variation>A</variation>
    <location>
        <position position="169"/>
    </location>
</feature>
<feature type="mutagenesis site" description="Strong decrease in activity." evidence="4">
    <original>S</original>
    <variation>A</variation>
    <location>
        <position position="171"/>
    </location>
</feature>
<evidence type="ECO:0000255" key="1">
    <source>
        <dbReference type="PROSITE-ProRule" id="PRU00159"/>
    </source>
</evidence>
<evidence type="ECO:0000269" key="2">
    <source>
    </source>
</evidence>
<evidence type="ECO:0000269" key="3">
    <source>
    </source>
</evidence>
<evidence type="ECO:0000269" key="4">
    <source>
    </source>
</evidence>
<evidence type="ECO:0000305" key="5"/>
<protein>
    <recommendedName>
        <fullName>DNA damage-responsive serine/threonine-protein kinase RqkA</fullName>
        <ecNumber>2.7.11.1</ecNumber>
    </recommendedName>
    <alternativeName>
        <fullName>Radiation and pyrroloquinoline quinone inducible protein kinase</fullName>
    </alternativeName>
</protein>
<gene>
    <name type="primary">rqkA</name>
    <name type="ordered locus">DR_2518</name>
</gene>
<organism>
    <name type="scientific">Deinococcus radiodurans (strain ATCC 13939 / DSM 20539 / JCM 16871 / CCUG 27074 / LMG 4051 / NBRC 15346 / NCIMB 9279 / VKM B-1422 / R1)</name>
    <dbReference type="NCBI Taxonomy" id="243230"/>
    <lineage>
        <taxon>Bacteria</taxon>
        <taxon>Thermotogati</taxon>
        <taxon>Deinococcota</taxon>
        <taxon>Deinococci</taxon>
        <taxon>Deinococcales</taxon>
        <taxon>Deinococcaceae</taxon>
        <taxon>Deinococcus</taxon>
    </lineage>
</organism>
<reference key="1">
    <citation type="journal article" date="1999" name="Science">
        <title>Genome sequence of the radioresistant bacterium Deinococcus radiodurans R1.</title>
        <authorList>
            <person name="White O."/>
            <person name="Eisen J.A."/>
            <person name="Heidelberg J.F."/>
            <person name="Hickey E.K."/>
            <person name="Peterson J.D."/>
            <person name="Dodson R.J."/>
            <person name="Haft D.H."/>
            <person name="Gwinn M.L."/>
            <person name="Nelson W.C."/>
            <person name="Richardson D.L."/>
            <person name="Moffat K.S."/>
            <person name="Qin H."/>
            <person name="Jiang L."/>
            <person name="Pamphile W."/>
            <person name="Crosby M."/>
            <person name="Shen M."/>
            <person name="Vamathevan J.J."/>
            <person name="Lam P."/>
            <person name="McDonald L.A."/>
            <person name="Utterback T.R."/>
            <person name="Zalewski C."/>
            <person name="Makarova K.S."/>
            <person name="Aravind L."/>
            <person name="Daly M.J."/>
            <person name="Minton K.W."/>
            <person name="Fleischmann R.D."/>
            <person name="Ketchum K.A."/>
            <person name="Nelson K.E."/>
            <person name="Salzberg S.L."/>
            <person name="Smith H.O."/>
            <person name="Venter J.C."/>
            <person name="Fraser C.M."/>
        </authorList>
    </citation>
    <scope>NUCLEOTIDE SEQUENCE [LARGE SCALE GENOMIC DNA]</scope>
    <source>
        <strain>ATCC 13939 / DSM 20539 / JCM 16871 / CCUG 27074 / LMG 4051 / NBRC 15346 / NCIMB 9279 / VKM B-1422 / R1</strain>
    </source>
</reference>
<reference key="2">
    <citation type="journal article" date="2010" name="Mol. Microbiol.">
        <title>Characterization of a DNA damage-inducible membrane protein kinase from Deinococcus radiodurans and its role in bacterial radioresistance and DNA strand break repair.</title>
        <authorList>
            <person name="Rajpurohit Y.S."/>
            <person name="Misra H.S."/>
        </authorList>
    </citation>
    <scope>FUNCTION</scope>
    <scope>CATALYTIC ACTIVITY</scope>
    <scope>COFACTOR</scope>
    <scope>ACTIVITY REGULATION</scope>
    <scope>INDUCTION</scope>
    <scope>DOMAIN</scope>
    <scope>AUTOPHOSPHORYLATION</scope>
    <scope>DISRUPTION PHENOTYPE</scope>
    <source>
        <strain>ATCC 13939 / DSM 20539 / JCM 16871 / CCUG 27074 / LMG 4051 / NBRC 15346 / NCIMB 9279 / VKM B-1422 / R1</strain>
    </source>
</reference>
<reference key="3">
    <citation type="journal article" date="2013" name="Int. J. Biochem. Cell Biol.">
        <title>Structure-function study of deinococcal serine/threonine protein kinase implicates its kinase activity and DNA repair protein phosphorylation roles in radioresistance of Deinococcus radiodurans.</title>
        <authorList>
            <person name="Rajpurohit Y.S."/>
            <person name="Misra H.S."/>
        </authorList>
    </citation>
    <scope>FUNCTION</scope>
    <scope>CATALYTIC ACTIVITY</scope>
    <scope>GENE NAME</scope>
    <scope>MUTAGENESIS OF LYS-42; SER-162; THR-169 AND SER-171</scope>
    <source>
        <strain>ATCC 13939 / DSM 20539 / JCM 16871 / CCUG 27074 / LMG 4051 / NBRC 15346 / NCIMB 9279 / VKM B-1422 / R1</strain>
    </source>
</reference>
<reference key="4">
    <citation type="journal article" date="2013" name="J. Basic Microbiol.">
        <title>Pyrroloquinoline quinone and a quinoprotein kinase support gamma-radiation resistance in Deinococcus radiodurans and regulate gene expression.</title>
        <authorList>
            <person name="Rajpurohit Y.S."/>
            <person name="Desai S.S."/>
            <person name="Misra H.S."/>
        </authorList>
    </citation>
    <scope>FUNCTION IN REGULATION OF GENES</scope>
    <scope>DISRUPTION PHENOTYPE</scope>
    <source>
        <strain>ATCC 13939 / DSM 20539 / JCM 16871 / CCUG 27074 / LMG 4051 / NBRC 15346 / NCIMB 9279 / VKM B-1422 / R1</strain>
    </source>
</reference>
<dbReference type="EC" id="2.7.11.1"/>
<dbReference type="EMBL" id="AE000513">
    <property type="protein sequence ID" value="AAF12057.1"/>
    <property type="molecule type" value="Genomic_DNA"/>
</dbReference>
<dbReference type="PIR" id="C75264">
    <property type="entry name" value="C75264"/>
</dbReference>
<dbReference type="RefSeq" id="NP_296238.1">
    <property type="nucleotide sequence ID" value="NC_001263.1"/>
</dbReference>
<dbReference type="RefSeq" id="WP_010889143.1">
    <property type="nucleotide sequence ID" value="NC_001263.1"/>
</dbReference>
<dbReference type="SMR" id="Q9RRH3"/>
<dbReference type="STRING" id="243230.DR_2518"/>
<dbReference type="PaxDb" id="243230-DR_2518"/>
<dbReference type="EnsemblBacteria" id="AAF12057">
    <property type="protein sequence ID" value="AAF12057"/>
    <property type="gene ID" value="DR_2518"/>
</dbReference>
<dbReference type="GeneID" id="69518771"/>
<dbReference type="KEGG" id="dra:DR_2518"/>
<dbReference type="PATRIC" id="fig|243230.17.peg.2760"/>
<dbReference type="eggNOG" id="COG0515">
    <property type="taxonomic scope" value="Bacteria"/>
</dbReference>
<dbReference type="eggNOG" id="COG1520">
    <property type="taxonomic scope" value="Bacteria"/>
</dbReference>
<dbReference type="HOGENOM" id="CLU_020359_0_0_0"/>
<dbReference type="InParanoid" id="Q9RRH3"/>
<dbReference type="OrthoDB" id="9788659at2"/>
<dbReference type="BRENDA" id="2.7.11.1">
    <property type="organism ID" value="1856"/>
</dbReference>
<dbReference type="Proteomes" id="UP000002524">
    <property type="component" value="Chromosome 1"/>
</dbReference>
<dbReference type="GO" id="GO:0005524">
    <property type="term" value="F:ATP binding"/>
    <property type="evidence" value="ECO:0007669"/>
    <property type="project" value="UniProtKB-KW"/>
</dbReference>
<dbReference type="GO" id="GO:0106310">
    <property type="term" value="F:protein serine kinase activity"/>
    <property type="evidence" value="ECO:0007669"/>
    <property type="project" value="RHEA"/>
</dbReference>
<dbReference type="GO" id="GO:0004674">
    <property type="term" value="F:protein serine/threonine kinase activity"/>
    <property type="evidence" value="ECO:0000318"/>
    <property type="project" value="GO_Central"/>
</dbReference>
<dbReference type="CDD" id="cd14014">
    <property type="entry name" value="STKc_PknB_like"/>
    <property type="match status" value="1"/>
</dbReference>
<dbReference type="Gene3D" id="3.30.200.20">
    <property type="entry name" value="Phosphorylase Kinase, domain 1"/>
    <property type="match status" value="1"/>
</dbReference>
<dbReference type="Gene3D" id="1.10.510.10">
    <property type="entry name" value="Transferase(Phosphotransferase) domain 1"/>
    <property type="match status" value="1"/>
</dbReference>
<dbReference type="Gene3D" id="2.130.10.10">
    <property type="entry name" value="YVTN repeat-like/Quinoprotein amine dehydrogenase"/>
    <property type="match status" value="2"/>
</dbReference>
<dbReference type="InterPro" id="IPR011009">
    <property type="entry name" value="Kinase-like_dom_sf"/>
</dbReference>
<dbReference type="InterPro" id="IPR018391">
    <property type="entry name" value="PQQ_b-propeller_rpt"/>
</dbReference>
<dbReference type="InterPro" id="IPR002372">
    <property type="entry name" value="PQQ_rpt_dom"/>
</dbReference>
<dbReference type="InterPro" id="IPR000719">
    <property type="entry name" value="Prot_kinase_dom"/>
</dbReference>
<dbReference type="InterPro" id="IPR017441">
    <property type="entry name" value="Protein_kinase_ATP_BS"/>
</dbReference>
<dbReference type="InterPro" id="IPR011047">
    <property type="entry name" value="Quinoprotein_ADH-like_sf"/>
</dbReference>
<dbReference type="InterPro" id="IPR008266">
    <property type="entry name" value="Tyr_kinase_AS"/>
</dbReference>
<dbReference type="InterPro" id="IPR015943">
    <property type="entry name" value="WD40/YVTN_repeat-like_dom_sf"/>
</dbReference>
<dbReference type="PANTHER" id="PTHR43289">
    <property type="entry name" value="MITOGEN-ACTIVATED PROTEIN KINASE KINASE KINASE 20-RELATED"/>
    <property type="match status" value="1"/>
</dbReference>
<dbReference type="PANTHER" id="PTHR43289:SF34">
    <property type="entry name" value="SERINE_THREONINE-PROTEIN KINASE YBDM-RELATED"/>
    <property type="match status" value="1"/>
</dbReference>
<dbReference type="Pfam" id="PF00069">
    <property type="entry name" value="Pkinase"/>
    <property type="match status" value="1"/>
</dbReference>
<dbReference type="Pfam" id="PF13360">
    <property type="entry name" value="PQQ_2"/>
    <property type="match status" value="2"/>
</dbReference>
<dbReference type="SMART" id="SM00564">
    <property type="entry name" value="PQQ"/>
    <property type="match status" value="7"/>
</dbReference>
<dbReference type="SUPFAM" id="SSF56112">
    <property type="entry name" value="Protein kinase-like (PK-like)"/>
    <property type="match status" value="1"/>
</dbReference>
<dbReference type="SUPFAM" id="SSF50998">
    <property type="entry name" value="Quinoprotein alcohol dehydrogenase-like"/>
    <property type="match status" value="2"/>
</dbReference>
<dbReference type="PROSITE" id="PS00107">
    <property type="entry name" value="PROTEIN_KINASE_ATP"/>
    <property type="match status" value="1"/>
</dbReference>
<dbReference type="PROSITE" id="PS50011">
    <property type="entry name" value="PROTEIN_KINASE_DOM"/>
    <property type="match status" value="1"/>
</dbReference>
<name>RQKA_DEIRA</name>
<comment type="function">
    <text evidence="2 3 4">Plays an important role in radiation resistance and DNA double-strand break (DSB) repair. Involved in transcriptional regulation of genes important for bacterial stress response. Phosphorylates PprA in vitro.</text>
</comment>
<comment type="catalytic activity">
    <reaction evidence="2 4">
        <text>L-seryl-[protein] + ATP = O-phospho-L-seryl-[protein] + ADP + H(+)</text>
        <dbReference type="Rhea" id="RHEA:17989"/>
        <dbReference type="Rhea" id="RHEA-COMP:9863"/>
        <dbReference type="Rhea" id="RHEA-COMP:11604"/>
        <dbReference type="ChEBI" id="CHEBI:15378"/>
        <dbReference type="ChEBI" id="CHEBI:29999"/>
        <dbReference type="ChEBI" id="CHEBI:30616"/>
        <dbReference type="ChEBI" id="CHEBI:83421"/>
        <dbReference type="ChEBI" id="CHEBI:456216"/>
        <dbReference type="EC" id="2.7.11.1"/>
    </reaction>
</comment>
<comment type="catalytic activity">
    <reaction evidence="2 4">
        <text>L-threonyl-[protein] + ATP = O-phospho-L-threonyl-[protein] + ADP + H(+)</text>
        <dbReference type="Rhea" id="RHEA:46608"/>
        <dbReference type="Rhea" id="RHEA-COMP:11060"/>
        <dbReference type="Rhea" id="RHEA-COMP:11605"/>
        <dbReference type="ChEBI" id="CHEBI:15378"/>
        <dbReference type="ChEBI" id="CHEBI:30013"/>
        <dbReference type="ChEBI" id="CHEBI:30616"/>
        <dbReference type="ChEBI" id="CHEBI:61977"/>
        <dbReference type="ChEBI" id="CHEBI:456216"/>
        <dbReference type="EC" id="2.7.11.1"/>
    </reaction>
</comment>
<comment type="cofactor">
    <cofactor evidence="2">
        <name>pyrroloquinoline quinone</name>
        <dbReference type="ChEBI" id="CHEBI:58442"/>
    </cofactor>
</comment>
<comment type="activity regulation">
    <text evidence="2">Autokinase activity is stimulated by DNA damage. Stimulated by PQQ and DNA ends in vitro.</text>
</comment>
<comment type="induction">
    <text evidence="2">Expression is induced in response to DNA damage.</text>
</comment>
<comment type="domain">
    <text evidence="2">Contains an N-terminal catalytic kinase domain and a C-terminal PQQ binding domain.</text>
</comment>
<comment type="PTM">
    <text>Autophosphorylated.</text>
</comment>
<comment type="disruption phenotype">
    <text evidence="2 3">Mutant exhibits higher sensitivity to different DNA-damaging agents. It shows altered phosphoprotein profile and impaired DSB repair. Deletion affects expression of genes involved in intermediary metabolism, stress response and growth under stressed conditions.</text>
</comment>
<comment type="similarity">
    <text evidence="1">Belongs to the protein kinase superfamily. Ser/Thr protein kinase family.</text>
</comment>